<name>SMYD3_HUMAN</name>
<comment type="function">
    <text evidence="4 5">Histone methyltransferase. Specifically methylates 'Lys-4' of histone H3, inducing di- and tri-methylation, but not monomethylation (PubMed:15235609, PubMed:22419068). Also methylates 'Lys-5' of histone H4 (PubMed:22419068). Plays an important role in transcriptional activation as a member of an RNA polymerase complex (PubMed:15235609). Binds DNA containing 5'-CCCTCC-3' or 5'-GAGGGG-3' sequences (PubMed:15235609).</text>
</comment>
<comment type="catalytic activity">
    <reaction evidence="3 4 5">
        <text>L-lysyl(4)-[histone H3] + 3 S-adenosyl-L-methionine = N(6),N(6),N(6)-trimethyl-L-lysyl(4)-[histone H3] + 3 S-adenosyl-L-homocysteine + 3 H(+)</text>
        <dbReference type="Rhea" id="RHEA:60260"/>
        <dbReference type="Rhea" id="RHEA-COMP:15537"/>
        <dbReference type="Rhea" id="RHEA-COMP:15547"/>
        <dbReference type="ChEBI" id="CHEBI:15378"/>
        <dbReference type="ChEBI" id="CHEBI:29969"/>
        <dbReference type="ChEBI" id="CHEBI:57856"/>
        <dbReference type="ChEBI" id="CHEBI:59789"/>
        <dbReference type="ChEBI" id="CHEBI:61961"/>
        <dbReference type="EC" id="2.1.1.354"/>
    </reaction>
</comment>
<comment type="activity regulation">
    <text evidence="4">Histone methyltransferase activity strongly stimulated by HSPCA.</text>
</comment>
<comment type="subunit">
    <text evidence="4 6">Interacts with HSPCA (PubMed:15235609). Interacts with HELZ (PubMed:15235609). Interacts with POLR2A; the interaction may be indirect and may be mediated by HELZ (PubMed:15235609). Interacts with HSP90AA1; this interaction enhances SMYD3 histone-lysine N-methyltransferase (PubMed:25738358).</text>
</comment>
<comment type="interaction">
    <interactant intactId="EBI-347919">
        <id>Q9H7B4</id>
    </interactant>
    <interactant intactId="EBI-747012">
        <id>Q9H0L4</id>
        <label>CSTF2T</label>
    </interactant>
    <organismsDiffer>false</organismsDiffer>
    <experiments>3</experiments>
</comment>
<comment type="interaction">
    <interactant intactId="EBI-347919">
        <id>Q9H7B4</id>
    </interactant>
    <interactant intactId="EBI-744099">
        <id>Q9H0I2</id>
        <label>ENKD1</label>
    </interactant>
    <organismsDiffer>false</organismsDiffer>
    <experiments>3</experiments>
</comment>
<comment type="interaction">
    <interactant intactId="EBI-347919">
        <id>Q9H7B4</id>
    </interactant>
    <interactant intactId="EBI-2340269">
        <id>Q13064</id>
        <label>MKRN3</label>
    </interactant>
    <organismsDiffer>false</organismsDiffer>
    <experiments>3</experiments>
</comment>
<comment type="interaction">
    <interactant intactId="EBI-347919">
        <id>Q9H7B4</id>
    </interactant>
    <interactant intactId="EBI-741048">
        <id>Q7Z3B4</id>
        <label>NUP54</label>
    </interactant>
    <organismsDiffer>false</organismsDiffer>
    <experiments>3</experiments>
</comment>
<comment type="interaction">
    <interactant intactId="EBI-347919">
        <id>Q9H7B4</id>
    </interactant>
    <interactant intactId="EBI-602382">
        <id>Q16512</id>
        <label>PKN1</label>
    </interactant>
    <organismsDiffer>false</organismsDiffer>
    <experiments>3</experiments>
</comment>
<comment type="interaction">
    <interactant intactId="EBI-347919">
        <id>Q9H7B4</id>
    </interactant>
    <interactant intactId="EBI-79084">
        <id>Q92529</id>
        <label>SHC3</label>
    </interactant>
    <organismsDiffer>false</organismsDiffer>
    <experiments>3</experiments>
</comment>
<comment type="interaction">
    <interactant intactId="EBI-347919">
        <id>Q9H7B4</id>
    </interactant>
    <interactant intactId="EBI-11963196">
        <id>Q15915</id>
        <label>ZIC1</label>
    </interactant>
    <organismsDiffer>false</organismsDiffer>
    <experiments>3</experiments>
</comment>
<comment type="interaction">
    <interactant intactId="EBI-16204880">
        <id>Q9H7B4-1</id>
    </interactant>
    <interactant intactId="EBI-357393">
        <id>Q9Y2U5</id>
        <label>MAP3K2</label>
    </interactant>
    <organismsDiffer>false</organismsDiffer>
    <experiments>3</experiments>
</comment>
<comment type="subcellular location">
    <subcellularLocation>
        <location evidence="4">Cytoplasm</location>
    </subcellularLocation>
    <subcellularLocation>
        <location evidence="4 6">Nucleus</location>
    </subcellularLocation>
    <text evidence="4">Mainly cytoplasmic when cells are arrested at G0/G1. Accumulates in the nucleus at S phase and G2/M.</text>
</comment>
<comment type="alternative products">
    <event type="alternative splicing"/>
    <isoform>
        <id>Q9H7B4-1</id>
        <name>1</name>
        <sequence type="displayed"/>
    </isoform>
    <isoform>
        <id>Q9H7B4-2</id>
        <name>2</name>
        <sequence type="described" ref="VSP_012416 VSP_012417"/>
    </isoform>
    <isoform>
        <id>Q9H7B4-3</id>
        <name>3</name>
        <sequence type="described" ref="VSP_035601"/>
    </isoform>
</comment>
<comment type="tissue specificity">
    <text evidence="4">Expressed in skeletal muscles and testis. Overexpressed in a majority of colorectal and hepatocellular carcinomas.</text>
</comment>
<comment type="similarity">
    <text evidence="3">Belongs to the class V-like SAM-binding methyltransferase superfamily. Histone-lysine methyltransferase family.</text>
</comment>
<comment type="online information" name="Atlas of Genetics and Cytogenetics in Oncology and Haematology">
    <link uri="https://atlasgeneticsoncology.org/gene/46100/SMYD3"/>
</comment>
<reference key="1">
    <citation type="journal article" date="2004" name="Nat. Cell Biol.">
        <title>SMYD3 encodes a histone methyltransferase involved in the proliferation of cancer cells.</title>
        <authorList>
            <person name="Hamamoto R."/>
            <person name="Furukawa Y."/>
            <person name="Morita M."/>
            <person name="Iimura Y."/>
            <person name="Silva F.P."/>
            <person name="Li M."/>
            <person name="Yagyu R."/>
            <person name="Nakamura Y."/>
        </authorList>
    </citation>
    <scope>NUCLEOTIDE SEQUENCE [MRNA] (ISOFORM 1)</scope>
    <scope>FUNCTION</scope>
    <scope>CATALYTIC ACTIVITY</scope>
    <scope>SUBCELLULAR LOCATION</scope>
    <scope>TISSUE SPECIFICITY</scope>
    <scope>INTERACTION WITH HSPCA; HELZ AND POLR2A</scope>
    <scope>DNA-BINDING</scope>
</reference>
<reference key="2">
    <citation type="submission" date="2002-11" db="EMBL/GenBank/DDBJ databases">
        <authorList>
            <person name="Sha J.H."/>
            <person name="Zhou Z.M."/>
            <person name="Xu M."/>
        </authorList>
    </citation>
    <scope>NUCLEOTIDE SEQUENCE [MRNA] (ISOFORM 2)</scope>
    <source>
        <tissue>Testis</tissue>
    </source>
</reference>
<reference key="3">
    <citation type="journal article" date="2004" name="Nat. Genet.">
        <title>Complete sequencing and characterization of 21,243 full-length human cDNAs.</title>
        <authorList>
            <person name="Ota T."/>
            <person name="Suzuki Y."/>
            <person name="Nishikawa T."/>
            <person name="Otsuki T."/>
            <person name="Sugiyama T."/>
            <person name="Irie R."/>
            <person name="Wakamatsu A."/>
            <person name="Hayashi K."/>
            <person name="Sato H."/>
            <person name="Nagai K."/>
            <person name="Kimura K."/>
            <person name="Makita H."/>
            <person name="Sekine M."/>
            <person name="Obayashi M."/>
            <person name="Nishi T."/>
            <person name="Shibahara T."/>
            <person name="Tanaka T."/>
            <person name="Ishii S."/>
            <person name="Yamamoto J."/>
            <person name="Saito K."/>
            <person name="Kawai Y."/>
            <person name="Isono Y."/>
            <person name="Nakamura Y."/>
            <person name="Nagahari K."/>
            <person name="Murakami K."/>
            <person name="Yasuda T."/>
            <person name="Iwayanagi T."/>
            <person name="Wagatsuma M."/>
            <person name="Shiratori A."/>
            <person name="Sudo H."/>
            <person name="Hosoiri T."/>
            <person name="Kaku Y."/>
            <person name="Kodaira H."/>
            <person name="Kondo H."/>
            <person name="Sugawara M."/>
            <person name="Takahashi M."/>
            <person name="Kanda K."/>
            <person name="Yokoi T."/>
            <person name="Furuya T."/>
            <person name="Kikkawa E."/>
            <person name="Omura Y."/>
            <person name="Abe K."/>
            <person name="Kamihara K."/>
            <person name="Katsuta N."/>
            <person name="Sato K."/>
            <person name="Tanikawa M."/>
            <person name="Yamazaki M."/>
            <person name="Ninomiya K."/>
            <person name="Ishibashi T."/>
            <person name="Yamashita H."/>
            <person name="Murakawa K."/>
            <person name="Fujimori K."/>
            <person name="Tanai H."/>
            <person name="Kimata M."/>
            <person name="Watanabe M."/>
            <person name="Hiraoka S."/>
            <person name="Chiba Y."/>
            <person name="Ishida S."/>
            <person name="Ono Y."/>
            <person name="Takiguchi S."/>
            <person name="Watanabe S."/>
            <person name="Yosida M."/>
            <person name="Hotuta T."/>
            <person name="Kusano J."/>
            <person name="Kanehori K."/>
            <person name="Takahashi-Fujii A."/>
            <person name="Hara H."/>
            <person name="Tanase T.-O."/>
            <person name="Nomura Y."/>
            <person name="Togiya S."/>
            <person name="Komai F."/>
            <person name="Hara R."/>
            <person name="Takeuchi K."/>
            <person name="Arita M."/>
            <person name="Imose N."/>
            <person name="Musashino K."/>
            <person name="Yuuki H."/>
            <person name="Oshima A."/>
            <person name="Sasaki N."/>
            <person name="Aotsuka S."/>
            <person name="Yoshikawa Y."/>
            <person name="Matsunawa H."/>
            <person name="Ichihara T."/>
            <person name="Shiohata N."/>
            <person name="Sano S."/>
            <person name="Moriya S."/>
            <person name="Momiyama H."/>
            <person name="Satoh N."/>
            <person name="Takami S."/>
            <person name="Terashima Y."/>
            <person name="Suzuki O."/>
            <person name="Nakagawa S."/>
            <person name="Senoh A."/>
            <person name="Mizoguchi H."/>
            <person name="Goto Y."/>
            <person name="Shimizu F."/>
            <person name="Wakebe H."/>
            <person name="Hishigaki H."/>
            <person name="Watanabe T."/>
            <person name="Sugiyama A."/>
            <person name="Takemoto M."/>
            <person name="Kawakami B."/>
            <person name="Yamazaki M."/>
            <person name="Watanabe K."/>
            <person name="Kumagai A."/>
            <person name="Itakura S."/>
            <person name="Fukuzumi Y."/>
            <person name="Fujimori Y."/>
            <person name="Komiyama M."/>
            <person name="Tashiro H."/>
            <person name="Tanigami A."/>
            <person name="Fujiwara T."/>
            <person name="Ono T."/>
            <person name="Yamada K."/>
            <person name="Fujii Y."/>
            <person name="Ozaki K."/>
            <person name="Hirao M."/>
            <person name="Ohmori Y."/>
            <person name="Kawabata A."/>
            <person name="Hikiji T."/>
            <person name="Kobatake N."/>
            <person name="Inagaki H."/>
            <person name="Ikema Y."/>
            <person name="Okamoto S."/>
            <person name="Okitani R."/>
            <person name="Kawakami T."/>
            <person name="Noguchi S."/>
            <person name="Itoh T."/>
            <person name="Shigeta K."/>
            <person name="Senba T."/>
            <person name="Matsumura K."/>
            <person name="Nakajima Y."/>
            <person name="Mizuno T."/>
            <person name="Morinaga M."/>
            <person name="Sasaki M."/>
            <person name="Togashi T."/>
            <person name="Oyama M."/>
            <person name="Hata H."/>
            <person name="Watanabe M."/>
            <person name="Komatsu T."/>
            <person name="Mizushima-Sugano J."/>
            <person name="Satoh T."/>
            <person name="Shirai Y."/>
            <person name="Takahashi Y."/>
            <person name="Nakagawa K."/>
            <person name="Okumura K."/>
            <person name="Nagase T."/>
            <person name="Nomura N."/>
            <person name="Kikuchi H."/>
            <person name="Masuho Y."/>
            <person name="Yamashita R."/>
            <person name="Nakai K."/>
            <person name="Yada T."/>
            <person name="Nakamura Y."/>
            <person name="Ohara O."/>
            <person name="Isogai T."/>
            <person name="Sugano S."/>
        </authorList>
    </citation>
    <scope>NUCLEOTIDE SEQUENCE [LARGE SCALE MRNA] (ISOFORMS 1 AND 3)</scope>
</reference>
<reference key="4">
    <citation type="journal article" date="2006" name="Nature">
        <title>The DNA sequence and biological annotation of human chromosome 1.</title>
        <authorList>
            <person name="Gregory S.G."/>
            <person name="Barlow K.F."/>
            <person name="McLay K.E."/>
            <person name="Kaul R."/>
            <person name="Swarbreck D."/>
            <person name="Dunham A."/>
            <person name="Scott C.E."/>
            <person name="Howe K.L."/>
            <person name="Woodfine K."/>
            <person name="Spencer C.C.A."/>
            <person name="Jones M.C."/>
            <person name="Gillson C."/>
            <person name="Searle S."/>
            <person name="Zhou Y."/>
            <person name="Kokocinski F."/>
            <person name="McDonald L."/>
            <person name="Evans R."/>
            <person name="Phillips K."/>
            <person name="Atkinson A."/>
            <person name="Cooper R."/>
            <person name="Jones C."/>
            <person name="Hall R.E."/>
            <person name="Andrews T.D."/>
            <person name="Lloyd C."/>
            <person name="Ainscough R."/>
            <person name="Almeida J.P."/>
            <person name="Ambrose K.D."/>
            <person name="Anderson F."/>
            <person name="Andrew R.W."/>
            <person name="Ashwell R.I.S."/>
            <person name="Aubin K."/>
            <person name="Babbage A.K."/>
            <person name="Bagguley C.L."/>
            <person name="Bailey J."/>
            <person name="Beasley H."/>
            <person name="Bethel G."/>
            <person name="Bird C.P."/>
            <person name="Bray-Allen S."/>
            <person name="Brown J.Y."/>
            <person name="Brown A.J."/>
            <person name="Buckley D."/>
            <person name="Burton J."/>
            <person name="Bye J."/>
            <person name="Carder C."/>
            <person name="Chapman J.C."/>
            <person name="Clark S.Y."/>
            <person name="Clarke G."/>
            <person name="Clee C."/>
            <person name="Cobley V."/>
            <person name="Collier R.E."/>
            <person name="Corby N."/>
            <person name="Coville G.J."/>
            <person name="Davies J."/>
            <person name="Deadman R."/>
            <person name="Dunn M."/>
            <person name="Earthrowl M."/>
            <person name="Ellington A.G."/>
            <person name="Errington H."/>
            <person name="Frankish A."/>
            <person name="Frankland J."/>
            <person name="French L."/>
            <person name="Garner P."/>
            <person name="Garnett J."/>
            <person name="Gay L."/>
            <person name="Ghori M.R.J."/>
            <person name="Gibson R."/>
            <person name="Gilby L.M."/>
            <person name="Gillett W."/>
            <person name="Glithero R.J."/>
            <person name="Grafham D.V."/>
            <person name="Griffiths C."/>
            <person name="Griffiths-Jones S."/>
            <person name="Grocock R."/>
            <person name="Hammond S."/>
            <person name="Harrison E.S.I."/>
            <person name="Hart E."/>
            <person name="Haugen E."/>
            <person name="Heath P.D."/>
            <person name="Holmes S."/>
            <person name="Holt K."/>
            <person name="Howden P.J."/>
            <person name="Hunt A.R."/>
            <person name="Hunt S.E."/>
            <person name="Hunter G."/>
            <person name="Isherwood J."/>
            <person name="James R."/>
            <person name="Johnson C."/>
            <person name="Johnson D."/>
            <person name="Joy A."/>
            <person name="Kay M."/>
            <person name="Kershaw J.K."/>
            <person name="Kibukawa M."/>
            <person name="Kimberley A.M."/>
            <person name="King A."/>
            <person name="Knights A.J."/>
            <person name="Lad H."/>
            <person name="Laird G."/>
            <person name="Lawlor S."/>
            <person name="Leongamornlert D.A."/>
            <person name="Lloyd D.M."/>
            <person name="Loveland J."/>
            <person name="Lovell J."/>
            <person name="Lush M.J."/>
            <person name="Lyne R."/>
            <person name="Martin S."/>
            <person name="Mashreghi-Mohammadi M."/>
            <person name="Matthews L."/>
            <person name="Matthews N.S.W."/>
            <person name="McLaren S."/>
            <person name="Milne S."/>
            <person name="Mistry S."/>
            <person name="Moore M.J.F."/>
            <person name="Nickerson T."/>
            <person name="O'Dell C.N."/>
            <person name="Oliver K."/>
            <person name="Palmeiri A."/>
            <person name="Palmer S.A."/>
            <person name="Parker A."/>
            <person name="Patel D."/>
            <person name="Pearce A.V."/>
            <person name="Peck A.I."/>
            <person name="Pelan S."/>
            <person name="Phelps K."/>
            <person name="Phillimore B.J."/>
            <person name="Plumb R."/>
            <person name="Rajan J."/>
            <person name="Raymond C."/>
            <person name="Rouse G."/>
            <person name="Saenphimmachak C."/>
            <person name="Sehra H.K."/>
            <person name="Sheridan E."/>
            <person name="Shownkeen R."/>
            <person name="Sims S."/>
            <person name="Skuce C.D."/>
            <person name="Smith M."/>
            <person name="Steward C."/>
            <person name="Subramanian S."/>
            <person name="Sycamore N."/>
            <person name="Tracey A."/>
            <person name="Tromans A."/>
            <person name="Van Helmond Z."/>
            <person name="Wall M."/>
            <person name="Wallis J.M."/>
            <person name="White S."/>
            <person name="Whitehead S.L."/>
            <person name="Wilkinson J.E."/>
            <person name="Willey D.L."/>
            <person name="Williams H."/>
            <person name="Wilming L."/>
            <person name="Wray P.W."/>
            <person name="Wu Z."/>
            <person name="Coulson A."/>
            <person name="Vaudin M."/>
            <person name="Sulston J.E."/>
            <person name="Durbin R.M."/>
            <person name="Hubbard T."/>
            <person name="Wooster R."/>
            <person name="Dunham I."/>
            <person name="Carter N.P."/>
            <person name="McVean G."/>
            <person name="Ross M.T."/>
            <person name="Harrow J."/>
            <person name="Olson M.V."/>
            <person name="Beck S."/>
            <person name="Rogers J."/>
            <person name="Bentley D.R."/>
        </authorList>
    </citation>
    <scope>NUCLEOTIDE SEQUENCE [LARGE SCALE GENOMIC DNA]</scope>
</reference>
<reference key="5">
    <citation type="submission" date="2005-07" db="EMBL/GenBank/DDBJ databases">
        <authorList>
            <person name="Mural R.J."/>
            <person name="Istrail S."/>
            <person name="Sutton G.G."/>
            <person name="Florea L."/>
            <person name="Halpern A.L."/>
            <person name="Mobarry C.M."/>
            <person name="Lippert R."/>
            <person name="Walenz B."/>
            <person name="Shatkay H."/>
            <person name="Dew I."/>
            <person name="Miller J.R."/>
            <person name="Flanigan M.J."/>
            <person name="Edwards N.J."/>
            <person name="Bolanos R."/>
            <person name="Fasulo D."/>
            <person name="Halldorsson B.V."/>
            <person name="Hannenhalli S."/>
            <person name="Turner R."/>
            <person name="Yooseph S."/>
            <person name="Lu F."/>
            <person name="Nusskern D.R."/>
            <person name="Shue B.C."/>
            <person name="Zheng X.H."/>
            <person name="Zhong F."/>
            <person name="Delcher A.L."/>
            <person name="Huson D.H."/>
            <person name="Kravitz S.A."/>
            <person name="Mouchard L."/>
            <person name="Reinert K."/>
            <person name="Remington K.A."/>
            <person name="Clark A.G."/>
            <person name="Waterman M.S."/>
            <person name="Eichler E.E."/>
            <person name="Adams M.D."/>
            <person name="Hunkapiller M.W."/>
            <person name="Myers E.W."/>
            <person name="Venter J.C."/>
        </authorList>
    </citation>
    <scope>NUCLEOTIDE SEQUENCE [LARGE SCALE GENOMIC DNA]</scope>
</reference>
<reference key="6">
    <citation type="journal article" date="2004" name="Genome Res.">
        <title>The status, quality, and expansion of the NIH full-length cDNA project: the Mammalian Gene Collection (MGC).</title>
        <authorList>
            <consortium name="The MGC Project Team"/>
        </authorList>
    </citation>
    <scope>NUCLEOTIDE SEQUENCE [LARGE SCALE MRNA] (ISOFORM 1)</scope>
    <source>
        <tissue>Colon</tissue>
        <tissue>Melanoma</tissue>
    </source>
</reference>
<reference key="7">
    <citation type="journal article" date="2011" name="BMC Syst. Biol.">
        <title>Initial characterization of the human central proteome.</title>
        <authorList>
            <person name="Burkard T.R."/>
            <person name="Planyavsky M."/>
            <person name="Kaupe I."/>
            <person name="Breitwieser F.P."/>
            <person name="Buerckstuemmer T."/>
            <person name="Bennett K.L."/>
            <person name="Superti-Furga G."/>
            <person name="Colinge J."/>
        </authorList>
    </citation>
    <scope>IDENTIFICATION BY MASS SPECTROMETRY [LARGE SCALE ANALYSIS]</scope>
</reference>
<reference key="8">
    <citation type="journal article" date="2012" name="Epigenetics">
        <title>Smyd3 regulates cancer cell phenotypes and catalyzes histone H4 lysine 5 methylation.</title>
        <authorList>
            <person name="Van Aller G.S."/>
            <person name="Reynoird N."/>
            <person name="Barbash O."/>
            <person name="Huddleston M."/>
            <person name="Liu S."/>
            <person name="Zmoos A.F."/>
            <person name="McDevitt P."/>
            <person name="Sinnamon R."/>
            <person name="Le B."/>
            <person name="Mas G."/>
            <person name="Annan R."/>
            <person name="Sage J."/>
            <person name="Garcia B.A."/>
            <person name="Tummino P.J."/>
            <person name="Gozani O."/>
            <person name="Kruger R.G."/>
        </authorList>
    </citation>
    <scope>CATALYTIC ACTIVITY</scope>
    <scope>FUNCTION</scope>
</reference>
<reference key="9">
    <citation type="journal article" date="2012" name="Proc. Natl. Acad. Sci. U.S.A.">
        <title>N-terminal acetylome analyses and functional insights of the N-terminal acetyltransferase NatB.</title>
        <authorList>
            <person name="Van Damme P."/>
            <person name="Lasa M."/>
            <person name="Polevoda B."/>
            <person name="Gazquez C."/>
            <person name="Elosegui-Artola A."/>
            <person name="Kim D.S."/>
            <person name="De Juan-Pardo E."/>
            <person name="Demeyer K."/>
            <person name="Hole K."/>
            <person name="Larrea E."/>
            <person name="Timmerman E."/>
            <person name="Prieto J."/>
            <person name="Arnesen T."/>
            <person name="Sherman F."/>
            <person name="Gevaert K."/>
            <person name="Aldabe R."/>
        </authorList>
    </citation>
    <scope>ACETYLATION [LARGE SCALE ANALYSIS] AT MET-1</scope>
    <scope>IDENTIFICATION BY MASS SPECTROMETRY [LARGE SCALE ANALYSIS]</scope>
</reference>
<reference key="10">
    <citation type="journal article" date="2013" name="J. Proteome Res.">
        <title>Toward a comprehensive characterization of a human cancer cell phosphoproteome.</title>
        <authorList>
            <person name="Zhou H."/>
            <person name="Di Palma S."/>
            <person name="Preisinger C."/>
            <person name="Peng M."/>
            <person name="Polat A.N."/>
            <person name="Heck A.J."/>
            <person name="Mohammed S."/>
        </authorList>
    </citation>
    <scope>PHOSPHORYLATION [LARGE SCALE ANALYSIS] AT THR-22</scope>
    <scope>IDENTIFICATION BY MASS SPECTROMETRY [LARGE SCALE ANALYSIS]</scope>
    <source>
        <tissue>Erythroleukemia</tissue>
    </source>
</reference>
<reference key="11">
    <citation type="journal article" date="2015" name="Oncotarget">
        <title>C-terminal domain of SMYD3 serves as a unique HSP90-regulated motif in oncogenesis.</title>
        <authorList>
            <person name="Brown M.A."/>
            <person name="Foreman K."/>
            <person name="Harriss J."/>
            <person name="Das C."/>
            <person name="Zhu L."/>
            <person name="Edwards M."/>
            <person name="Shaaban S."/>
            <person name="Tucker H."/>
        </authorList>
    </citation>
    <scope>INTERACTION WITH HSP90AA1</scope>
    <scope>DOMAIN C-TERMINAL</scope>
    <scope>SUBCELLULAR LOCATION</scope>
</reference>
<reference key="12">
    <citation type="submission" date="2010-04" db="PDB data bank">
        <title>Crystal structure of human histone-lysine n-methyltransferase SMYD3 in complex with S-adenosyl-L-methionine.</title>
        <authorList>
            <consortium name="Structural genomics consortium (SGC)"/>
        </authorList>
    </citation>
    <scope>X-RAY CRYSTALLOGRAPHY (2.1 ANGSTROMS) IN COMPLEX WITH S-ADENOSYL-L-METHIONINE AND ZINC IONS</scope>
</reference>
<sequence>MEPLKVEKFATAKRGNGLRAVTPLRPGELLFRSDPLAYTVCKGSRGVVCDRCLLGKEKLMRCSQCRVAKYCSAKCQKKAWPDHKRECKCLKSCKPRYPPDSVRLLGRVVFKLMDGAPSESEKLYSFYDLESNINKLTEDKKEGLRQLVMTFQHFMREEIQDASQLPPAFDLFEAFAKVICNSFTICNAEMQEVGVGLYPSISLLNHSCDPNCSIVFNGPHLLLRAVRDIEVGEELTICYLDMLMTSEERRKQLRDQYCFECDCFRCQTQDKDADMLTGDEQVWKEVQESLKKIEELKAHWKWEQVLAMCQAIISSNSERLPDINIYQLKVLDCAMDACINLGLLEEALFYGTRTMEPYRIFFPGSHPVRGVQVMKVGKLQLHQGMFPQAMKNLRLAFDIMRVTHGREHSLIEDLILLLEECDANIRAS</sequence>
<accession>Q9H7B4</accession>
<accession>A8K0P0</accession>
<accession>B1AN38</accession>
<accession>Q86TL8</accession>
<accession>Q8N5Z6</accession>
<accession>Q96AI5</accession>
<protein>
    <recommendedName>
        <fullName>Histone-lysine N-methyltransferase SMYD3</fullName>
        <ecNumber evidence="3 4 5">2.1.1.354</ecNumber>
    </recommendedName>
    <alternativeName>
        <fullName>SET and MYND domain-containing protein 3</fullName>
    </alternativeName>
    <alternativeName>
        <fullName>Zinc finger MYND domain-containing protein 1</fullName>
    </alternativeName>
</protein>
<feature type="chain" id="PRO_0000218312" description="Histone-lysine N-methyltransferase SMYD3">
    <location>
        <begin position="1"/>
        <end position="428"/>
    </location>
</feature>
<feature type="domain" description="SET" evidence="2">
    <location>
        <begin position="4"/>
        <end position="240"/>
    </location>
</feature>
<feature type="zinc finger region" description="MYND-type" evidence="1">
    <location>
        <begin position="49"/>
        <end position="87"/>
    </location>
</feature>
<feature type="region of interest" description="C-terminal domain; essential for histone methyltransferase activity, nuclear localization and mediates interaction with HSP90AA1" evidence="6">
    <location>
        <begin position="272"/>
        <end position="428"/>
    </location>
</feature>
<feature type="binding site" evidence="7">
    <location>
        <begin position="14"/>
        <end position="16"/>
    </location>
    <ligand>
        <name>S-adenosyl-L-methionine</name>
        <dbReference type="ChEBI" id="CHEBI:59789"/>
    </ligand>
</feature>
<feature type="binding site" evidence="1">
    <location>
        <position position="49"/>
    </location>
    <ligand>
        <name>Zn(2+)</name>
        <dbReference type="ChEBI" id="CHEBI:29105"/>
        <label>1</label>
    </ligand>
</feature>
<feature type="binding site" evidence="1">
    <location>
        <position position="52"/>
    </location>
    <ligand>
        <name>Zn(2+)</name>
        <dbReference type="ChEBI" id="CHEBI:29105"/>
        <label>1</label>
    </ligand>
</feature>
<feature type="binding site" evidence="1">
    <location>
        <position position="62"/>
    </location>
    <ligand>
        <name>Zn(2+)</name>
        <dbReference type="ChEBI" id="CHEBI:29105"/>
        <label>2</label>
    </ligand>
</feature>
<feature type="binding site" evidence="1">
    <location>
        <position position="65"/>
    </location>
    <ligand>
        <name>Zn(2+)</name>
        <dbReference type="ChEBI" id="CHEBI:29105"/>
        <label>2</label>
    </ligand>
</feature>
<feature type="binding site" evidence="1">
    <location>
        <position position="71"/>
    </location>
    <ligand>
        <name>Zn(2+)</name>
        <dbReference type="ChEBI" id="CHEBI:29105"/>
        <label>1</label>
    </ligand>
</feature>
<feature type="binding site" evidence="1">
    <location>
        <position position="75"/>
    </location>
    <ligand>
        <name>Zn(2+)</name>
        <dbReference type="ChEBI" id="CHEBI:29105"/>
        <label>1</label>
    </ligand>
</feature>
<feature type="binding site" evidence="1">
    <location>
        <position position="83"/>
    </location>
    <ligand>
        <name>Zn(2+)</name>
        <dbReference type="ChEBI" id="CHEBI:29105"/>
        <label>2</label>
    </ligand>
</feature>
<feature type="binding site" evidence="1">
    <location>
        <position position="87"/>
    </location>
    <ligand>
        <name>Zn(2+)</name>
        <dbReference type="ChEBI" id="CHEBI:29105"/>
        <label>2</label>
    </ligand>
</feature>
<feature type="binding site" evidence="2 7">
    <location>
        <position position="124"/>
    </location>
    <ligand>
        <name>S-adenosyl-L-methionine</name>
        <dbReference type="ChEBI" id="CHEBI:59789"/>
    </ligand>
</feature>
<feature type="binding site" evidence="2 7">
    <location>
        <position position="132"/>
    </location>
    <ligand>
        <name>S-adenosyl-L-methionine</name>
        <dbReference type="ChEBI" id="CHEBI:59789"/>
    </ligand>
</feature>
<feature type="binding site" evidence="2 7">
    <location>
        <position position="181"/>
    </location>
    <ligand>
        <name>S-adenosyl-L-methionine</name>
        <dbReference type="ChEBI" id="CHEBI:59789"/>
    </ligand>
</feature>
<feature type="binding site" evidence="7">
    <location>
        <begin position="205"/>
        <end position="206"/>
    </location>
    <ligand>
        <name>S-adenosyl-L-methionine</name>
        <dbReference type="ChEBI" id="CHEBI:59789"/>
    </ligand>
</feature>
<feature type="binding site" evidence="2 7">
    <location>
        <position position="239"/>
    </location>
    <ligand>
        <name>S-adenosyl-L-methionine</name>
        <dbReference type="ChEBI" id="CHEBI:59789"/>
    </ligand>
</feature>
<feature type="binding site" evidence="2 7">
    <location>
        <position position="259"/>
    </location>
    <ligand>
        <name>S-adenosyl-L-methionine</name>
        <dbReference type="ChEBI" id="CHEBI:59789"/>
    </ligand>
</feature>
<feature type="modified residue" description="N-acetylmethionine" evidence="11">
    <location>
        <position position="1"/>
    </location>
</feature>
<feature type="modified residue" description="Phosphothreonine" evidence="12">
    <location>
        <position position="22"/>
    </location>
</feature>
<feature type="splice variant" id="VSP_012416" description="In isoform 2." evidence="9">
    <location>
        <begin position="1"/>
        <end position="170"/>
    </location>
</feature>
<feature type="splice variant" id="VSP_035601" description="In isoform 3." evidence="8">
    <location>
        <begin position="1"/>
        <end position="59"/>
    </location>
</feature>
<feature type="splice variant" id="VSP_012417" description="In isoform 2." evidence="9">
    <original>LFEAFA</original>
    <variation>MEEEEE</variation>
    <location>
        <begin position="171"/>
        <end position="176"/>
    </location>
</feature>
<feature type="sequence conflict" description="In Ref. 1; BAB86333 and 6; AAH31010." evidence="10" ref="1 6">
    <original>K</original>
    <variation>N</variation>
    <location>
        <position position="13"/>
    </location>
</feature>
<feature type="sequence conflict" description="In Ref. 6; AAH31010." evidence="10" ref="6">
    <original>K</original>
    <variation>R</variation>
    <location>
        <position position="140"/>
    </location>
</feature>
<feature type="strand" evidence="15">
    <location>
        <begin position="5"/>
        <end position="10"/>
    </location>
</feature>
<feature type="strand" evidence="15">
    <location>
        <begin position="12"/>
        <end position="22"/>
    </location>
</feature>
<feature type="strand" evidence="15">
    <location>
        <begin position="29"/>
        <end position="33"/>
    </location>
</feature>
<feature type="strand" evidence="15">
    <location>
        <begin position="36"/>
        <end position="40"/>
    </location>
</feature>
<feature type="helix" evidence="15">
    <location>
        <begin position="42"/>
        <end position="44"/>
    </location>
</feature>
<feature type="turn" evidence="16">
    <location>
        <begin position="45"/>
        <end position="47"/>
    </location>
</feature>
<feature type="turn" evidence="15">
    <location>
        <begin position="50"/>
        <end position="52"/>
    </location>
</feature>
<feature type="turn" evidence="15">
    <location>
        <begin position="63"/>
        <end position="65"/>
    </location>
</feature>
<feature type="strand" evidence="15">
    <location>
        <begin position="69"/>
        <end position="72"/>
    </location>
</feature>
<feature type="helix" evidence="15">
    <location>
        <begin position="73"/>
        <end position="92"/>
    </location>
</feature>
<feature type="turn" evidence="17">
    <location>
        <begin position="93"/>
        <end position="95"/>
    </location>
</feature>
<feature type="helix" evidence="15">
    <location>
        <begin position="100"/>
        <end position="114"/>
    </location>
</feature>
<feature type="helix" evidence="15">
    <location>
        <begin position="119"/>
        <end position="121"/>
    </location>
</feature>
<feature type="strand" evidence="15">
    <location>
        <begin position="122"/>
        <end position="124"/>
    </location>
</feature>
<feature type="helix" evidence="15">
    <location>
        <begin position="126"/>
        <end position="128"/>
    </location>
</feature>
<feature type="helix" evidence="15">
    <location>
        <begin position="133"/>
        <end position="135"/>
    </location>
</feature>
<feature type="helix" evidence="15">
    <location>
        <begin position="138"/>
        <end position="154"/>
    </location>
</feature>
<feature type="turn" evidence="15">
    <location>
        <begin position="155"/>
        <end position="158"/>
    </location>
</feature>
<feature type="helix" evidence="15">
    <location>
        <begin position="162"/>
        <end position="164"/>
    </location>
</feature>
<feature type="helix" evidence="15">
    <location>
        <begin position="171"/>
        <end position="181"/>
    </location>
</feature>
<feature type="strand" evidence="15">
    <location>
        <begin position="183"/>
        <end position="186"/>
    </location>
</feature>
<feature type="strand" evidence="15">
    <location>
        <begin position="192"/>
        <end position="197"/>
    </location>
</feature>
<feature type="helix" evidence="15">
    <location>
        <begin position="201"/>
        <end position="203"/>
    </location>
</feature>
<feature type="strand" evidence="15">
    <location>
        <begin position="211"/>
        <end position="217"/>
    </location>
</feature>
<feature type="strand" evidence="15">
    <location>
        <begin position="220"/>
        <end position="225"/>
    </location>
</feature>
<feature type="strand" evidence="15">
    <location>
        <begin position="234"/>
        <end position="237"/>
    </location>
</feature>
<feature type="helix" evidence="15">
    <location>
        <begin position="246"/>
        <end position="257"/>
    </location>
</feature>
<feature type="helix" evidence="15">
    <location>
        <begin position="264"/>
        <end position="268"/>
    </location>
</feature>
<feature type="turn" evidence="15">
    <location>
        <begin position="269"/>
        <end position="271"/>
    </location>
</feature>
<feature type="helix" evidence="15">
    <location>
        <begin position="272"/>
        <end position="275"/>
    </location>
</feature>
<feature type="helix" evidence="15">
    <location>
        <begin position="280"/>
        <end position="298"/>
    </location>
</feature>
<feature type="helix" evidence="15">
    <location>
        <begin position="302"/>
        <end position="313"/>
    </location>
</feature>
<feature type="turn" evidence="14">
    <location>
        <begin position="316"/>
        <end position="319"/>
    </location>
</feature>
<feature type="helix" evidence="15">
    <location>
        <begin position="325"/>
        <end position="341"/>
    </location>
</feature>
<feature type="helix" evidence="15">
    <location>
        <begin position="344"/>
        <end position="361"/>
    </location>
</feature>
<feature type="helix" evidence="15">
    <location>
        <begin position="367"/>
        <end position="382"/>
    </location>
</feature>
<feature type="helix" evidence="15">
    <location>
        <begin position="386"/>
        <end position="403"/>
    </location>
</feature>
<feature type="turn" evidence="13">
    <location>
        <begin position="404"/>
        <end position="407"/>
    </location>
</feature>
<feature type="helix" evidence="15">
    <location>
        <begin position="409"/>
        <end position="426"/>
    </location>
</feature>
<evidence type="ECO:0000255" key="1">
    <source>
        <dbReference type="PROSITE-ProRule" id="PRU00134"/>
    </source>
</evidence>
<evidence type="ECO:0000255" key="2">
    <source>
        <dbReference type="PROSITE-ProRule" id="PRU00190"/>
    </source>
</evidence>
<evidence type="ECO:0000255" key="3">
    <source>
        <dbReference type="PROSITE-ProRule" id="PRU00907"/>
    </source>
</evidence>
<evidence type="ECO:0000269" key="4">
    <source>
    </source>
</evidence>
<evidence type="ECO:0000269" key="5">
    <source>
    </source>
</evidence>
<evidence type="ECO:0000269" key="6">
    <source>
    </source>
</evidence>
<evidence type="ECO:0000269" key="7">
    <source ref="12"/>
</evidence>
<evidence type="ECO:0000303" key="8">
    <source>
    </source>
</evidence>
<evidence type="ECO:0000303" key="9">
    <source ref="2"/>
</evidence>
<evidence type="ECO:0000305" key="10"/>
<evidence type="ECO:0007744" key="11">
    <source>
    </source>
</evidence>
<evidence type="ECO:0007744" key="12">
    <source>
    </source>
</evidence>
<evidence type="ECO:0007829" key="13">
    <source>
        <dbReference type="PDB" id="3OXF"/>
    </source>
</evidence>
<evidence type="ECO:0007829" key="14">
    <source>
        <dbReference type="PDB" id="5HQ8"/>
    </source>
</evidence>
<evidence type="ECO:0007829" key="15">
    <source>
        <dbReference type="PDB" id="6P7Z"/>
    </source>
</evidence>
<evidence type="ECO:0007829" key="16">
    <source>
        <dbReference type="PDB" id="6PAF"/>
    </source>
</evidence>
<evidence type="ECO:0007829" key="17">
    <source>
        <dbReference type="PDB" id="7O2C"/>
    </source>
</evidence>
<proteinExistence type="evidence at protein level"/>
<keyword id="KW-0002">3D-structure</keyword>
<keyword id="KW-0007">Acetylation</keyword>
<keyword id="KW-0025">Alternative splicing</keyword>
<keyword id="KW-0156">Chromatin regulator</keyword>
<keyword id="KW-0963">Cytoplasm</keyword>
<keyword id="KW-0479">Metal-binding</keyword>
<keyword id="KW-0489">Methyltransferase</keyword>
<keyword id="KW-0539">Nucleus</keyword>
<keyword id="KW-0597">Phosphoprotein</keyword>
<keyword id="KW-1267">Proteomics identification</keyword>
<keyword id="KW-1185">Reference proteome</keyword>
<keyword id="KW-0949">S-adenosyl-L-methionine</keyword>
<keyword id="KW-0808">Transferase</keyword>
<keyword id="KW-0862">Zinc</keyword>
<keyword id="KW-0863">Zinc-finger</keyword>
<gene>
    <name type="primary">SMYD3</name>
    <name type="synonym">ZMYND1</name>
    <name type="synonym">ZNFN3A1</name>
</gene>
<organism>
    <name type="scientific">Homo sapiens</name>
    <name type="common">Human</name>
    <dbReference type="NCBI Taxonomy" id="9606"/>
    <lineage>
        <taxon>Eukaryota</taxon>
        <taxon>Metazoa</taxon>
        <taxon>Chordata</taxon>
        <taxon>Craniata</taxon>
        <taxon>Vertebrata</taxon>
        <taxon>Euteleostomi</taxon>
        <taxon>Mammalia</taxon>
        <taxon>Eutheria</taxon>
        <taxon>Euarchontoglires</taxon>
        <taxon>Primates</taxon>
        <taxon>Haplorrhini</taxon>
        <taxon>Catarrhini</taxon>
        <taxon>Hominidae</taxon>
        <taxon>Homo</taxon>
    </lineage>
</organism>
<dbReference type="EC" id="2.1.1.354" evidence="3 4 5"/>
<dbReference type="EMBL" id="AB057595">
    <property type="protein sequence ID" value="BAB86333.1"/>
    <property type="molecule type" value="mRNA"/>
</dbReference>
<dbReference type="EMBL" id="AY186742">
    <property type="protein sequence ID" value="AAO31695.1"/>
    <property type="molecule type" value="mRNA"/>
</dbReference>
<dbReference type="EMBL" id="AK024733">
    <property type="protein sequence ID" value="BAB14981.1"/>
    <property type="molecule type" value="mRNA"/>
</dbReference>
<dbReference type="EMBL" id="AK289605">
    <property type="protein sequence ID" value="BAF82294.1"/>
    <property type="molecule type" value="mRNA"/>
</dbReference>
<dbReference type="EMBL" id="AL356583">
    <property type="status" value="NOT_ANNOTATED_CDS"/>
    <property type="molecule type" value="Genomic_DNA"/>
</dbReference>
<dbReference type="EMBL" id="AL358859">
    <property type="status" value="NOT_ANNOTATED_CDS"/>
    <property type="molecule type" value="Genomic_DNA"/>
</dbReference>
<dbReference type="EMBL" id="AL445468">
    <property type="status" value="NOT_ANNOTATED_CDS"/>
    <property type="molecule type" value="Genomic_DNA"/>
</dbReference>
<dbReference type="EMBL" id="AL512412">
    <property type="status" value="NOT_ANNOTATED_CDS"/>
    <property type="molecule type" value="Genomic_DNA"/>
</dbReference>
<dbReference type="EMBL" id="CH471148">
    <property type="protein sequence ID" value="EAW77142.1"/>
    <property type="molecule type" value="Genomic_DNA"/>
</dbReference>
<dbReference type="EMBL" id="BC017079">
    <property type="protein sequence ID" value="AAH17079.2"/>
    <property type="molecule type" value="mRNA"/>
</dbReference>
<dbReference type="EMBL" id="BC031010">
    <property type="protein sequence ID" value="AAH31010.1"/>
    <property type="molecule type" value="mRNA"/>
</dbReference>
<dbReference type="CCDS" id="CCDS31083.1">
    <molecule id="Q9H7B4-3"/>
</dbReference>
<dbReference type="CCDS" id="CCDS53486.1">
    <molecule id="Q9H7B4-1"/>
</dbReference>
<dbReference type="RefSeq" id="NP_001161212.1">
    <molecule id="Q9H7B4-1"/>
    <property type="nucleotide sequence ID" value="NM_001167740.2"/>
</dbReference>
<dbReference type="RefSeq" id="NP_001362892.1">
    <molecule id="Q9H7B4-3"/>
    <property type="nucleotide sequence ID" value="NM_001375963.1"/>
</dbReference>
<dbReference type="RefSeq" id="NP_073580.1">
    <molecule id="Q9H7B4-3"/>
    <property type="nucleotide sequence ID" value="NM_022743.3"/>
</dbReference>
<dbReference type="RefSeq" id="XP_011542559.1">
    <molecule id="Q9H7B4-2"/>
    <property type="nucleotide sequence ID" value="XM_011544257.2"/>
</dbReference>
<dbReference type="RefSeq" id="XP_024304904.1">
    <molecule id="Q9H7B4-3"/>
    <property type="nucleotide sequence ID" value="XM_024449136.2"/>
</dbReference>
<dbReference type="RefSeq" id="XP_047283976.1">
    <molecule id="Q9H7B4-3"/>
    <property type="nucleotide sequence ID" value="XM_047428020.1"/>
</dbReference>
<dbReference type="RefSeq" id="XP_047283977.1">
    <molecule id="Q9H7B4-3"/>
    <property type="nucleotide sequence ID" value="XM_047428021.1"/>
</dbReference>
<dbReference type="RefSeq" id="XP_054194248.1">
    <molecule id="Q9H7B4-3"/>
    <property type="nucleotide sequence ID" value="XM_054338273.1"/>
</dbReference>
<dbReference type="RefSeq" id="XP_054194249.1">
    <molecule id="Q9H7B4-3"/>
    <property type="nucleotide sequence ID" value="XM_054338274.1"/>
</dbReference>
<dbReference type="RefSeq" id="XP_054194250.1">
    <molecule id="Q9H7B4-3"/>
    <property type="nucleotide sequence ID" value="XM_054338275.1"/>
</dbReference>
<dbReference type="RefSeq" id="XP_054194251.1">
    <molecule id="Q9H7B4-2"/>
    <property type="nucleotide sequence ID" value="XM_054338276.1"/>
</dbReference>
<dbReference type="PDB" id="3MEK">
    <property type="method" value="X-ray"/>
    <property type="resolution" value="2.10 A"/>
    <property type="chains" value="A=1-428"/>
</dbReference>
<dbReference type="PDB" id="3OXF">
    <property type="method" value="X-ray"/>
    <property type="resolution" value="2.82 A"/>
    <property type="chains" value="A/B=1-428"/>
</dbReference>
<dbReference type="PDB" id="3OXG">
    <property type="method" value="X-ray"/>
    <property type="resolution" value="3.41 A"/>
    <property type="chains" value="A=1-428"/>
</dbReference>
<dbReference type="PDB" id="3OXL">
    <property type="method" value="X-ray"/>
    <property type="resolution" value="3.60 A"/>
    <property type="chains" value="A=1-428"/>
</dbReference>
<dbReference type="PDB" id="3PDN">
    <property type="method" value="X-ray"/>
    <property type="resolution" value="1.70 A"/>
    <property type="chains" value="A=1-428"/>
</dbReference>
<dbReference type="PDB" id="3QWP">
    <property type="method" value="X-ray"/>
    <property type="resolution" value="1.53 A"/>
    <property type="chains" value="A=1-428"/>
</dbReference>
<dbReference type="PDB" id="3RU0">
    <property type="method" value="X-ray"/>
    <property type="resolution" value="1.85 A"/>
    <property type="chains" value="A/B=2-428"/>
</dbReference>
<dbReference type="PDB" id="5CCL">
    <property type="method" value="X-ray"/>
    <property type="resolution" value="1.50 A"/>
    <property type="chains" value="A=1-428"/>
</dbReference>
<dbReference type="PDB" id="5CCM">
    <property type="method" value="X-ray"/>
    <property type="resolution" value="2.30 A"/>
    <property type="chains" value="A=1-428"/>
</dbReference>
<dbReference type="PDB" id="5EX0">
    <property type="method" value="X-ray"/>
    <property type="resolution" value="2.70 A"/>
    <property type="chains" value="A=1-428"/>
</dbReference>
<dbReference type="PDB" id="5EX3">
    <property type="method" value="X-ray"/>
    <property type="resolution" value="2.41 A"/>
    <property type="chains" value="A=1-428"/>
</dbReference>
<dbReference type="PDB" id="5HI7">
    <property type="method" value="X-ray"/>
    <property type="resolution" value="2.15 A"/>
    <property type="chains" value="A=1-428"/>
</dbReference>
<dbReference type="PDB" id="5HQ8">
    <property type="method" value="X-ray"/>
    <property type="resolution" value="1.72 A"/>
    <property type="chains" value="A/B=1-428"/>
</dbReference>
<dbReference type="PDB" id="5V37">
    <property type="method" value="X-ray"/>
    <property type="resolution" value="1.42 A"/>
    <property type="chains" value="A=1-428"/>
</dbReference>
<dbReference type="PDB" id="5XXD">
    <property type="method" value="X-ray"/>
    <property type="resolution" value="2.31 A"/>
    <property type="chains" value="A=3-425"/>
</dbReference>
<dbReference type="PDB" id="5XXG">
    <property type="method" value="X-ray"/>
    <property type="resolution" value="2.14 A"/>
    <property type="chains" value="A=3-425"/>
</dbReference>
<dbReference type="PDB" id="5XXJ">
    <property type="method" value="X-ray"/>
    <property type="resolution" value="1.69 A"/>
    <property type="chains" value="A=3-425"/>
</dbReference>
<dbReference type="PDB" id="5YJO">
    <property type="method" value="X-ray"/>
    <property type="resolution" value="2.13 A"/>
    <property type="chains" value="A=3-425"/>
</dbReference>
<dbReference type="PDB" id="6IJL">
    <property type="method" value="X-ray"/>
    <property type="resolution" value="2.35 A"/>
    <property type="chains" value="A=1-428"/>
</dbReference>
<dbReference type="PDB" id="6O9O">
    <property type="method" value="X-ray"/>
    <property type="resolution" value="1.59 A"/>
    <property type="chains" value="A=1-428"/>
</dbReference>
<dbReference type="PDB" id="6P6G">
    <property type="method" value="X-ray"/>
    <property type="resolution" value="1.59 A"/>
    <property type="chains" value="A=1-428"/>
</dbReference>
<dbReference type="PDB" id="6P6K">
    <property type="method" value="X-ray"/>
    <property type="resolution" value="1.55 A"/>
    <property type="chains" value="A=1-428"/>
</dbReference>
<dbReference type="PDB" id="6P7Z">
    <property type="method" value="X-ray"/>
    <property type="resolution" value="1.19 A"/>
    <property type="chains" value="A=1-428"/>
</dbReference>
<dbReference type="PDB" id="6PAF">
    <property type="method" value="X-ray"/>
    <property type="resolution" value="1.24 A"/>
    <property type="chains" value="A=1-428"/>
</dbReference>
<dbReference type="PDB" id="6YUH">
    <property type="method" value="X-ray"/>
    <property type="resolution" value="1.93 A"/>
    <property type="chains" value="A=3-427"/>
</dbReference>
<dbReference type="PDB" id="6ZRB">
    <property type="method" value="X-ray"/>
    <property type="resolution" value="1.55 A"/>
    <property type="chains" value="A=1-428"/>
</dbReference>
<dbReference type="PDB" id="7BJ1">
    <property type="method" value="X-ray"/>
    <property type="resolution" value="1.61 A"/>
    <property type="chains" value="A=1-428"/>
</dbReference>
<dbReference type="PDB" id="7O2A">
    <property type="method" value="X-ray"/>
    <property type="resolution" value="1.57 A"/>
    <property type="chains" value="A=1-428"/>
</dbReference>
<dbReference type="PDB" id="7O2B">
    <property type="method" value="X-ray"/>
    <property type="resolution" value="2.03 A"/>
    <property type="chains" value="A=1-428"/>
</dbReference>
<dbReference type="PDB" id="7O2C">
    <property type="method" value="X-ray"/>
    <property type="resolution" value="1.52 A"/>
    <property type="chains" value="A=1-428"/>
</dbReference>
<dbReference type="PDB" id="7QLB">
    <property type="method" value="X-ray"/>
    <property type="resolution" value="1.80 A"/>
    <property type="chains" value="A=1-428"/>
</dbReference>
<dbReference type="PDB" id="7QNR">
    <property type="method" value="X-ray"/>
    <property type="resolution" value="1.57 A"/>
    <property type="chains" value="A=1-428"/>
</dbReference>
<dbReference type="PDB" id="7QNU">
    <property type="method" value="X-ray"/>
    <property type="resolution" value="1.64 A"/>
    <property type="chains" value="A=1-428"/>
</dbReference>
<dbReference type="PDB" id="8OWO">
    <property type="method" value="X-ray"/>
    <property type="resolution" value="1.80 A"/>
    <property type="chains" value="A=1-428"/>
</dbReference>
<dbReference type="PDBsum" id="3MEK"/>
<dbReference type="PDBsum" id="3OXF"/>
<dbReference type="PDBsum" id="3OXG"/>
<dbReference type="PDBsum" id="3OXL"/>
<dbReference type="PDBsum" id="3PDN"/>
<dbReference type="PDBsum" id="3QWP"/>
<dbReference type="PDBsum" id="3RU0"/>
<dbReference type="PDBsum" id="5CCL"/>
<dbReference type="PDBsum" id="5CCM"/>
<dbReference type="PDBsum" id="5EX0"/>
<dbReference type="PDBsum" id="5EX3"/>
<dbReference type="PDBsum" id="5HI7"/>
<dbReference type="PDBsum" id="5HQ8"/>
<dbReference type="PDBsum" id="5V37"/>
<dbReference type="PDBsum" id="5XXD"/>
<dbReference type="PDBsum" id="5XXG"/>
<dbReference type="PDBsum" id="5XXJ"/>
<dbReference type="PDBsum" id="5YJO"/>
<dbReference type="PDBsum" id="6IJL"/>
<dbReference type="PDBsum" id="6O9O"/>
<dbReference type="PDBsum" id="6P6G"/>
<dbReference type="PDBsum" id="6P6K"/>
<dbReference type="PDBsum" id="6P7Z"/>
<dbReference type="PDBsum" id="6PAF"/>
<dbReference type="PDBsum" id="6YUH"/>
<dbReference type="PDBsum" id="6ZRB"/>
<dbReference type="PDBsum" id="7BJ1"/>
<dbReference type="PDBsum" id="7O2A"/>
<dbReference type="PDBsum" id="7O2B"/>
<dbReference type="PDBsum" id="7O2C"/>
<dbReference type="PDBsum" id="7QLB"/>
<dbReference type="PDBsum" id="7QNR"/>
<dbReference type="PDBsum" id="7QNU"/>
<dbReference type="PDBsum" id="8OWO"/>
<dbReference type="SMR" id="Q9H7B4"/>
<dbReference type="BioGRID" id="122268">
    <property type="interactions" value="71"/>
</dbReference>
<dbReference type="DIP" id="DIP-32653N"/>
<dbReference type="FunCoup" id="Q9H7B4">
    <property type="interactions" value="1978"/>
</dbReference>
<dbReference type="IntAct" id="Q9H7B4">
    <property type="interactions" value="51"/>
</dbReference>
<dbReference type="MINT" id="Q9H7B4"/>
<dbReference type="STRING" id="9606.ENSP00000419184"/>
<dbReference type="BindingDB" id="Q9H7B4"/>
<dbReference type="ChEMBL" id="CHEMBL2321643"/>
<dbReference type="GlyGen" id="Q9H7B4">
    <property type="glycosylation" value="1 site, 1 O-linked glycan (1 site)"/>
</dbReference>
<dbReference type="iPTMnet" id="Q9H7B4"/>
<dbReference type="MetOSite" id="Q9H7B4"/>
<dbReference type="PhosphoSitePlus" id="Q9H7B4"/>
<dbReference type="SwissPalm" id="Q9H7B4"/>
<dbReference type="BioMuta" id="SMYD3"/>
<dbReference type="DMDM" id="212276523"/>
<dbReference type="jPOST" id="Q9H7B4"/>
<dbReference type="MassIVE" id="Q9H7B4"/>
<dbReference type="PaxDb" id="9606-ENSP00000419184"/>
<dbReference type="PeptideAtlas" id="Q9H7B4"/>
<dbReference type="ProteomicsDB" id="81096">
    <molecule id="Q9H7B4-1"/>
</dbReference>
<dbReference type="ProteomicsDB" id="81097">
    <molecule id="Q9H7B4-2"/>
</dbReference>
<dbReference type="ProteomicsDB" id="81098">
    <molecule id="Q9H7B4-3"/>
</dbReference>
<dbReference type="Pumba" id="Q9H7B4"/>
<dbReference type="ABCD" id="Q9H7B4">
    <property type="antibodies" value="9 sequenced antibodies"/>
</dbReference>
<dbReference type="Antibodypedia" id="34720">
    <property type="antibodies" value="289 antibodies from 37 providers"/>
</dbReference>
<dbReference type="DNASU" id="64754"/>
<dbReference type="Ensembl" id="ENST00000490107.6">
    <molecule id="Q9H7B4-1"/>
    <property type="protein sequence ID" value="ENSP00000419184.2"/>
    <property type="gene ID" value="ENSG00000185420.19"/>
</dbReference>
<dbReference type="Ensembl" id="ENST00000630181.2">
    <molecule id="Q9H7B4-3"/>
    <property type="protein sequence ID" value="ENSP00000487434.1"/>
    <property type="gene ID" value="ENSG00000185420.19"/>
</dbReference>
<dbReference type="GeneID" id="64754"/>
<dbReference type="KEGG" id="hsa:64754"/>
<dbReference type="MANE-Select" id="ENST00000490107.6">
    <property type="protein sequence ID" value="ENSP00000419184.2"/>
    <property type="RefSeq nucleotide sequence ID" value="NM_001167740.2"/>
    <property type="RefSeq protein sequence ID" value="NP_001161212.1"/>
</dbReference>
<dbReference type="UCSC" id="uc001ibl.4">
    <molecule id="Q9H7B4-1"/>
    <property type="organism name" value="human"/>
</dbReference>
<dbReference type="AGR" id="HGNC:15513"/>
<dbReference type="CTD" id="64754"/>
<dbReference type="DisGeNET" id="64754"/>
<dbReference type="GeneCards" id="SMYD3"/>
<dbReference type="HGNC" id="HGNC:15513">
    <property type="gene designation" value="SMYD3"/>
</dbReference>
<dbReference type="HPA" id="ENSG00000185420">
    <property type="expression patterns" value="Low tissue specificity"/>
</dbReference>
<dbReference type="MIM" id="608783">
    <property type="type" value="gene"/>
</dbReference>
<dbReference type="neXtProt" id="NX_Q9H7B4"/>
<dbReference type="OpenTargets" id="ENSG00000185420"/>
<dbReference type="PharmGKB" id="PA37972"/>
<dbReference type="VEuPathDB" id="HostDB:ENSG00000185420"/>
<dbReference type="eggNOG" id="KOG2084">
    <property type="taxonomic scope" value="Eukaryota"/>
</dbReference>
<dbReference type="GeneTree" id="ENSGT00940000156766"/>
<dbReference type="InParanoid" id="Q9H7B4"/>
<dbReference type="OMA" id="LHMKLGK"/>
<dbReference type="OrthoDB" id="265717at2759"/>
<dbReference type="PAN-GO" id="Q9H7B4">
    <property type="GO annotations" value="3 GO annotations based on evolutionary models"/>
</dbReference>
<dbReference type="PhylomeDB" id="Q9H7B4"/>
<dbReference type="TreeFam" id="TF106487"/>
<dbReference type="BioCyc" id="MetaCyc:HS11979-MONOMER"/>
<dbReference type="BRENDA" id="2.1.1.354">
    <property type="organism ID" value="2681"/>
</dbReference>
<dbReference type="PathwayCommons" id="Q9H7B4"/>
<dbReference type="Reactome" id="R-HSA-3214841">
    <property type="pathway name" value="PKMTs methylate histone lysines"/>
</dbReference>
<dbReference type="SignaLink" id="Q9H7B4"/>
<dbReference type="BioGRID-ORCS" id="64754">
    <property type="hits" value="16 hits in 1177 CRISPR screens"/>
</dbReference>
<dbReference type="ChiTaRS" id="SMYD3">
    <property type="organism name" value="human"/>
</dbReference>
<dbReference type="EvolutionaryTrace" id="Q9H7B4"/>
<dbReference type="GeneWiki" id="SMYD3"/>
<dbReference type="GenomeRNAi" id="64754"/>
<dbReference type="Pharos" id="Q9H7B4">
    <property type="development level" value="Tchem"/>
</dbReference>
<dbReference type="PRO" id="PR:Q9H7B4"/>
<dbReference type="Proteomes" id="UP000005640">
    <property type="component" value="Chromosome 1"/>
</dbReference>
<dbReference type="RNAct" id="Q9H7B4">
    <property type="molecule type" value="protein"/>
</dbReference>
<dbReference type="Bgee" id="ENSG00000185420">
    <property type="expression patterns" value="Expressed in corpus epididymis and 170 other cell types or tissues"/>
</dbReference>
<dbReference type="ExpressionAtlas" id="Q9H7B4">
    <property type="expression patterns" value="baseline and differential"/>
</dbReference>
<dbReference type="GO" id="GO:0005829">
    <property type="term" value="C:cytosol"/>
    <property type="evidence" value="ECO:0000314"/>
    <property type="project" value="HPA"/>
</dbReference>
<dbReference type="GO" id="GO:0005654">
    <property type="term" value="C:nucleoplasm"/>
    <property type="evidence" value="ECO:0000314"/>
    <property type="project" value="HPA"/>
</dbReference>
<dbReference type="GO" id="GO:0005634">
    <property type="term" value="C:nucleus"/>
    <property type="evidence" value="ECO:0000314"/>
    <property type="project" value="UniProtKB"/>
</dbReference>
<dbReference type="GO" id="GO:0140954">
    <property type="term" value="F:histone H3K36 dimethyltransferase activity"/>
    <property type="evidence" value="ECO:0000250"/>
    <property type="project" value="UniProtKB"/>
</dbReference>
<dbReference type="GO" id="GO:0140999">
    <property type="term" value="F:histone H3K4 trimethyltransferase activity"/>
    <property type="evidence" value="ECO:0007669"/>
    <property type="project" value="UniProtKB-EC"/>
</dbReference>
<dbReference type="GO" id="GO:0140939">
    <property type="term" value="F:histone H4 methyltransferase activity"/>
    <property type="evidence" value="ECO:0000315"/>
    <property type="project" value="UniProtKB"/>
</dbReference>
<dbReference type="GO" id="GO:0000978">
    <property type="term" value="F:RNA polymerase II cis-regulatory region sequence-specific DNA binding"/>
    <property type="evidence" value="ECO:0007669"/>
    <property type="project" value="Ensembl"/>
</dbReference>
<dbReference type="GO" id="GO:0000993">
    <property type="term" value="F:RNA polymerase II complex binding"/>
    <property type="evidence" value="ECO:0007669"/>
    <property type="project" value="Ensembl"/>
</dbReference>
<dbReference type="GO" id="GO:0001162">
    <property type="term" value="F:RNA polymerase II intronic transcription regulatory region sequence-specific DNA binding"/>
    <property type="evidence" value="ECO:0007669"/>
    <property type="project" value="Ensembl"/>
</dbReference>
<dbReference type="GO" id="GO:0008270">
    <property type="term" value="F:zinc ion binding"/>
    <property type="evidence" value="ECO:0007669"/>
    <property type="project" value="UniProtKB-KW"/>
</dbReference>
<dbReference type="GO" id="GO:0071549">
    <property type="term" value="P:cellular response to dexamethasone stimulus"/>
    <property type="evidence" value="ECO:0007669"/>
    <property type="project" value="Ensembl"/>
</dbReference>
<dbReference type="GO" id="GO:0045184">
    <property type="term" value="P:establishment of protein localization"/>
    <property type="evidence" value="ECO:0007669"/>
    <property type="project" value="Ensembl"/>
</dbReference>
<dbReference type="GO" id="GO:0032259">
    <property type="term" value="P:methylation"/>
    <property type="evidence" value="ECO:0007669"/>
    <property type="project" value="UniProtKB-KW"/>
</dbReference>
<dbReference type="GO" id="GO:0014904">
    <property type="term" value="P:myotube cell development"/>
    <property type="evidence" value="ECO:0007669"/>
    <property type="project" value="Ensembl"/>
</dbReference>
<dbReference type="GO" id="GO:0006334">
    <property type="term" value="P:nucleosome assembly"/>
    <property type="evidence" value="ECO:0007669"/>
    <property type="project" value="Ensembl"/>
</dbReference>
<dbReference type="GO" id="GO:0045944">
    <property type="term" value="P:positive regulation of transcription by RNA polymerase II"/>
    <property type="evidence" value="ECO:0007669"/>
    <property type="project" value="Ensembl"/>
</dbReference>
<dbReference type="CDD" id="cd19203">
    <property type="entry name" value="SET_SMYD3"/>
    <property type="match status" value="1"/>
</dbReference>
<dbReference type="FunFam" id="2.170.270.10:FF:000013">
    <property type="entry name" value="Histone-lysine N-methyltransferase SMYD1 isoform 1"/>
    <property type="match status" value="1"/>
</dbReference>
<dbReference type="FunFam" id="1.10.220.160:FF:000003">
    <property type="entry name" value="Histone-lysine N-methyltransferase SMYD3"/>
    <property type="match status" value="1"/>
</dbReference>
<dbReference type="FunFam" id="1.25.40.10:FF:000262">
    <property type="entry name" value="Histone-lysine N-methyltransferase SMYD3"/>
    <property type="match status" value="1"/>
</dbReference>
<dbReference type="FunFam" id="1.25.40.970:FF:000003">
    <property type="entry name" value="Histone-lysine N-methyltransferase SMYD3"/>
    <property type="match status" value="1"/>
</dbReference>
<dbReference type="FunFam" id="6.10.140.2220:FF:000017">
    <property type="entry name" value="Histone-lysine N-methyltransferase SMYD3"/>
    <property type="match status" value="1"/>
</dbReference>
<dbReference type="Gene3D" id="1.10.220.160">
    <property type="match status" value="1"/>
</dbReference>
<dbReference type="Gene3D" id="1.25.40.970">
    <property type="match status" value="1"/>
</dbReference>
<dbReference type="Gene3D" id="6.10.140.2220">
    <property type="match status" value="1"/>
</dbReference>
<dbReference type="Gene3D" id="2.170.270.10">
    <property type="entry name" value="SET domain"/>
    <property type="match status" value="1"/>
</dbReference>
<dbReference type="Gene3D" id="1.25.40.10">
    <property type="entry name" value="Tetratricopeptide repeat domain"/>
    <property type="match status" value="1"/>
</dbReference>
<dbReference type="InterPro" id="IPR050869">
    <property type="entry name" value="H3K4_H4K5_MeTrfase"/>
</dbReference>
<dbReference type="InterPro" id="IPR025805">
    <property type="entry name" value="Hist-Lys_N-MeTrfase_SMYD3"/>
</dbReference>
<dbReference type="InterPro" id="IPR001214">
    <property type="entry name" value="SET_dom"/>
</dbReference>
<dbReference type="InterPro" id="IPR046341">
    <property type="entry name" value="SET_dom_sf"/>
</dbReference>
<dbReference type="InterPro" id="IPR044420">
    <property type="entry name" value="SMYD3_SET"/>
</dbReference>
<dbReference type="InterPro" id="IPR011990">
    <property type="entry name" value="TPR-like_helical_dom_sf"/>
</dbReference>
<dbReference type="InterPro" id="IPR002893">
    <property type="entry name" value="Znf_MYND"/>
</dbReference>
<dbReference type="PANTHER" id="PTHR12197">
    <property type="entry name" value="HISTONE-LYSINE N-METHYLTRANSFERASE SMYD"/>
    <property type="match status" value="1"/>
</dbReference>
<dbReference type="PANTHER" id="PTHR12197:SF288">
    <property type="entry name" value="HISTONE-LYSINE N-METHYLTRANSFERASE SMYD3"/>
    <property type="match status" value="1"/>
</dbReference>
<dbReference type="Pfam" id="PF00856">
    <property type="entry name" value="SET"/>
    <property type="match status" value="1"/>
</dbReference>
<dbReference type="Pfam" id="PF01753">
    <property type="entry name" value="zf-MYND"/>
    <property type="match status" value="1"/>
</dbReference>
<dbReference type="SMART" id="SM00317">
    <property type="entry name" value="SET"/>
    <property type="match status" value="1"/>
</dbReference>
<dbReference type="SUPFAM" id="SSF82199">
    <property type="entry name" value="SET domain"/>
    <property type="match status" value="1"/>
</dbReference>
<dbReference type="PROSITE" id="PS51574">
    <property type="entry name" value="SAM_MT43_2"/>
    <property type="match status" value="1"/>
</dbReference>
<dbReference type="PROSITE" id="PS50280">
    <property type="entry name" value="SET"/>
    <property type="match status" value="1"/>
</dbReference>
<dbReference type="PROSITE" id="PS01360">
    <property type="entry name" value="ZF_MYND_1"/>
    <property type="match status" value="1"/>
</dbReference>
<dbReference type="PROSITE" id="PS50865">
    <property type="entry name" value="ZF_MYND_2"/>
    <property type="match status" value="1"/>
</dbReference>